<dbReference type="EC" id="3.1.4.11" evidence="8"/>
<dbReference type="EMBL" id="AK074240">
    <property type="protein sequence ID" value="BAB85029.1"/>
    <property type="molecule type" value="mRNA"/>
</dbReference>
<dbReference type="EMBL" id="BC010668">
    <property type="protein sequence ID" value="AAH10668.2"/>
    <property type="molecule type" value="mRNA"/>
</dbReference>
<dbReference type="EMBL" id="BC072384">
    <property type="protein sequence ID" value="AAH72384.1"/>
    <property type="molecule type" value="mRNA"/>
</dbReference>
<dbReference type="EMBL" id="AL834392">
    <property type="protein sequence ID" value="CAD39054.2"/>
    <property type="molecule type" value="mRNA"/>
</dbReference>
<dbReference type="EMBL" id="AB075844">
    <property type="protein sequence ID" value="BAB85550.1"/>
    <property type="molecule type" value="mRNA"/>
</dbReference>
<dbReference type="CCDS" id="CCDS74077.1"/>
<dbReference type="RefSeq" id="NP_588614.1">
    <property type="nucleotide sequence ID" value="NM_133373.5"/>
</dbReference>
<dbReference type="SMR" id="Q8N3E9"/>
<dbReference type="BioGRID" id="125222">
    <property type="interactions" value="157"/>
</dbReference>
<dbReference type="FunCoup" id="Q8N3E9">
    <property type="interactions" value="853"/>
</dbReference>
<dbReference type="IntAct" id="Q8N3E9">
    <property type="interactions" value="109"/>
</dbReference>
<dbReference type="MINT" id="Q8N3E9"/>
<dbReference type="STRING" id="9606.ENSP00000479636"/>
<dbReference type="SwissLipids" id="SLP:000001067"/>
<dbReference type="GlyGen" id="Q8N3E9">
    <property type="glycosylation" value="1 site"/>
</dbReference>
<dbReference type="iPTMnet" id="Q8N3E9"/>
<dbReference type="PhosphoSitePlus" id="Q8N3E9"/>
<dbReference type="SwissPalm" id="Q8N3E9"/>
<dbReference type="BioMuta" id="PLCD3"/>
<dbReference type="DMDM" id="158706388"/>
<dbReference type="jPOST" id="Q8N3E9"/>
<dbReference type="MassIVE" id="Q8N3E9"/>
<dbReference type="PaxDb" id="9606-ENSP00000479636"/>
<dbReference type="PeptideAtlas" id="Q8N3E9"/>
<dbReference type="ProteomicsDB" id="71794"/>
<dbReference type="Pumba" id="Q8N3E9"/>
<dbReference type="Antibodypedia" id="8300">
    <property type="antibodies" value="90 antibodies from 26 providers"/>
</dbReference>
<dbReference type="DNASU" id="113026"/>
<dbReference type="Ensembl" id="ENST00000619929.5">
    <property type="protein sequence ID" value="ENSP00000479636.1"/>
    <property type="gene ID" value="ENSG00000161714.12"/>
</dbReference>
<dbReference type="GeneID" id="113026"/>
<dbReference type="KEGG" id="hsa:113026"/>
<dbReference type="MANE-Select" id="ENST00000619929.5">
    <property type="protein sequence ID" value="ENSP00000479636.1"/>
    <property type="RefSeq nucleotide sequence ID" value="NM_133373.5"/>
    <property type="RefSeq protein sequence ID" value="NP_588614.1"/>
</dbReference>
<dbReference type="UCSC" id="uc032fjs.2">
    <property type="organism name" value="human"/>
</dbReference>
<dbReference type="AGR" id="HGNC:9061"/>
<dbReference type="CTD" id="113026"/>
<dbReference type="DisGeNET" id="113026"/>
<dbReference type="GeneCards" id="PLCD3"/>
<dbReference type="HGNC" id="HGNC:9061">
    <property type="gene designation" value="PLCD3"/>
</dbReference>
<dbReference type="HPA" id="ENSG00000161714">
    <property type="expression patterns" value="Tissue enhanced (skeletal)"/>
</dbReference>
<dbReference type="MIM" id="608795">
    <property type="type" value="gene"/>
</dbReference>
<dbReference type="neXtProt" id="NX_Q8N3E9"/>
<dbReference type="OpenTargets" id="ENSG00000161714"/>
<dbReference type="PharmGKB" id="PA33389"/>
<dbReference type="VEuPathDB" id="HostDB:ENSG00000161714"/>
<dbReference type="eggNOG" id="KOG0169">
    <property type="taxonomic scope" value="Eukaryota"/>
</dbReference>
<dbReference type="GeneTree" id="ENSGT00940000156993"/>
<dbReference type="HOGENOM" id="CLU_002738_0_2_1"/>
<dbReference type="InParanoid" id="Q8N3E9"/>
<dbReference type="OMA" id="LAVYCHA"/>
<dbReference type="OrthoDB" id="269822at2759"/>
<dbReference type="PAN-GO" id="Q8N3E9">
    <property type="GO annotations" value="2 GO annotations based on evolutionary models"/>
</dbReference>
<dbReference type="PhylomeDB" id="Q8N3E9"/>
<dbReference type="TreeFam" id="TF313216"/>
<dbReference type="PathwayCommons" id="Q8N3E9"/>
<dbReference type="Reactome" id="R-HSA-1855204">
    <property type="pathway name" value="Synthesis of IP3 and IP4 in the cytosol"/>
</dbReference>
<dbReference type="SABIO-RK" id="Q8N3E9"/>
<dbReference type="SignaLink" id="Q8N3E9"/>
<dbReference type="BioGRID-ORCS" id="113026">
    <property type="hits" value="10 hits in 327 CRISPR screens"/>
</dbReference>
<dbReference type="CD-CODE" id="FB4E32DD">
    <property type="entry name" value="Presynaptic clusters and postsynaptic densities"/>
</dbReference>
<dbReference type="ChiTaRS" id="PLCD3">
    <property type="organism name" value="human"/>
</dbReference>
<dbReference type="GeneWiki" id="PLCD3"/>
<dbReference type="GenomeRNAi" id="113026"/>
<dbReference type="Pharos" id="Q8N3E9">
    <property type="development level" value="Tbio"/>
</dbReference>
<dbReference type="PRO" id="PR:Q8N3E9"/>
<dbReference type="Proteomes" id="UP000005640">
    <property type="component" value="Chromosome 17"/>
</dbReference>
<dbReference type="RNAct" id="Q8N3E9">
    <property type="molecule type" value="protein"/>
</dbReference>
<dbReference type="Bgee" id="ENSG00000161714">
    <property type="expression patterns" value="Expressed in mucosa of transverse colon and 133 other cell types or tissues"/>
</dbReference>
<dbReference type="ExpressionAtlas" id="Q8N3E9">
    <property type="expression patterns" value="baseline and differential"/>
</dbReference>
<dbReference type="GO" id="GO:0032154">
    <property type="term" value="C:cleavage furrow"/>
    <property type="evidence" value="ECO:0007669"/>
    <property type="project" value="UniProtKB-SubCell"/>
</dbReference>
<dbReference type="GO" id="GO:0005737">
    <property type="term" value="C:cytoplasm"/>
    <property type="evidence" value="ECO:0007669"/>
    <property type="project" value="UniProtKB-SubCell"/>
</dbReference>
<dbReference type="GO" id="GO:0005886">
    <property type="term" value="C:plasma membrane"/>
    <property type="evidence" value="ECO:0000318"/>
    <property type="project" value="GO_Central"/>
</dbReference>
<dbReference type="GO" id="GO:0046872">
    <property type="term" value="F:metal ion binding"/>
    <property type="evidence" value="ECO:0007669"/>
    <property type="project" value="UniProtKB-KW"/>
</dbReference>
<dbReference type="GO" id="GO:0004435">
    <property type="term" value="F:phosphatidylinositol-4,5-bisphosphate phospholipase C activity"/>
    <property type="evidence" value="ECO:0000318"/>
    <property type="project" value="GO_Central"/>
</dbReference>
<dbReference type="GO" id="GO:0001525">
    <property type="term" value="P:angiogenesis"/>
    <property type="evidence" value="ECO:0007669"/>
    <property type="project" value="Ensembl"/>
</dbReference>
<dbReference type="GO" id="GO:0035556">
    <property type="term" value="P:intracellular signal transduction"/>
    <property type="evidence" value="ECO:0007669"/>
    <property type="project" value="InterPro"/>
</dbReference>
<dbReference type="GO" id="GO:0060716">
    <property type="term" value="P:labyrinthine layer blood vessel development"/>
    <property type="evidence" value="ECO:0007669"/>
    <property type="project" value="Ensembl"/>
</dbReference>
<dbReference type="GO" id="GO:0016042">
    <property type="term" value="P:lipid catabolic process"/>
    <property type="evidence" value="ECO:0007669"/>
    <property type="project" value="UniProtKB-KW"/>
</dbReference>
<dbReference type="GO" id="GO:0042127">
    <property type="term" value="P:regulation of cell population proliferation"/>
    <property type="evidence" value="ECO:0007669"/>
    <property type="project" value="Ensembl"/>
</dbReference>
<dbReference type="CDD" id="cd00275">
    <property type="entry name" value="C2_PLC_like"/>
    <property type="match status" value="1"/>
</dbReference>
<dbReference type="CDD" id="cd16218">
    <property type="entry name" value="EFh_PI-PLCdelta3"/>
    <property type="match status" value="1"/>
</dbReference>
<dbReference type="CDD" id="cd13363">
    <property type="entry name" value="PH_PLC_delta"/>
    <property type="match status" value="1"/>
</dbReference>
<dbReference type="CDD" id="cd08630">
    <property type="entry name" value="PI-PLCc_delta3"/>
    <property type="match status" value="1"/>
</dbReference>
<dbReference type="FunFam" id="1.10.238.10:FF:000005">
    <property type="entry name" value="Phosphoinositide phospholipase C"/>
    <property type="match status" value="1"/>
</dbReference>
<dbReference type="FunFam" id="1.10.238.10:FF:000071">
    <property type="entry name" value="Phosphoinositide phospholipase C"/>
    <property type="match status" value="1"/>
</dbReference>
<dbReference type="FunFam" id="2.30.29.30:FF:000088">
    <property type="entry name" value="Phosphoinositide phospholipase C"/>
    <property type="match status" value="1"/>
</dbReference>
<dbReference type="FunFam" id="2.60.40.150:FF:000058">
    <property type="entry name" value="Phosphoinositide phospholipase C"/>
    <property type="match status" value="1"/>
</dbReference>
<dbReference type="FunFam" id="3.20.20.190:FF:000026">
    <property type="entry name" value="Phosphoinositide phospholipase C"/>
    <property type="match status" value="1"/>
</dbReference>
<dbReference type="Gene3D" id="2.60.40.150">
    <property type="entry name" value="C2 domain"/>
    <property type="match status" value="1"/>
</dbReference>
<dbReference type="Gene3D" id="1.10.238.10">
    <property type="entry name" value="EF-hand"/>
    <property type="match status" value="2"/>
</dbReference>
<dbReference type="Gene3D" id="3.20.20.190">
    <property type="entry name" value="Phosphatidylinositol (PI) phosphodiesterase"/>
    <property type="match status" value="1"/>
</dbReference>
<dbReference type="Gene3D" id="2.30.29.30">
    <property type="entry name" value="Pleckstrin-homology domain (PH domain)/Phosphotyrosine-binding domain (PTB)"/>
    <property type="match status" value="1"/>
</dbReference>
<dbReference type="InterPro" id="IPR000008">
    <property type="entry name" value="C2_dom"/>
</dbReference>
<dbReference type="InterPro" id="IPR035892">
    <property type="entry name" value="C2_domain_sf"/>
</dbReference>
<dbReference type="InterPro" id="IPR011992">
    <property type="entry name" value="EF-hand-dom_pair"/>
</dbReference>
<dbReference type="InterPro" id="IPR018247">
    <property type="entry name" value="EF_Hand_1_Ca_BS"/>
</dbReference>
<dbReference type="InterPro" id="IPR011993">
    <property type="entry name" value="PH-like_dom_sf"/>
</dbReference>
<dbReference type="InterPro" id="IPR001849">
    <property type="entry name" value="PH_domain"/>
</dbReference>
<dbReference type="InterPro" id="IPR001192">
    <property type="entry name" value="PI-PLC_fam"/>
</dbReference>
<dbReference type="InterPro" id="IPR039504">
    <property type="entry name" value="PLC-delta3_EF-hand"/>
</dbReference>
<dbReference type="InterPro" id="IPR017946">
    <property type="entry name" value="PLC-like_Pdiesterase_TIM-brl"/>
</dbReference>
<dbReference type="InterPro" id="IPR000909">
    <property type="entry name" value="PLipase_C_PInositol-sp_X_dom"/>
</dbReference>
<dbReference type="InterPro" id="IPR001711">
    <property type="entry name" value="PLipase_C_Pinositol-sp_Y"/>
</dbReference>
<dbReference type="PANTHER" id="PTHR10336:SF33">
    <property type="entry name" value="1-PHOSPHATIDYLINOSITOL 4,5-BISPHOSPHATE PHOSPHODIESTERASE DELTA-3"/>
    <property type="match status" value="1"/>
</dbReference>
<dbReference type="PANTHER" id="PTHR10336">
    <property type="entry name" value="PHOSPHOINOSITIDE-SPECIFIC PHOSPHOLIPASE C FAMILY PROTEIN"/>
    <property type="match status" value="1"/>
</dbReference>
<dbReference type="Pfam" id="PF00168">
    <property type="entry name" value="C2"/>
    <property type="match status" value="1"/>
</dbReference>
<dbReference type="Pfam" id="PF14788">
    <property type="entry name" value="EF-hand_10"/>
    <property type="match status" value="1"/>
</dbReference>
<dbReference type="Pfam" id="PF00388">
    <property type="entry name" value="PI-PLC-X"/>
    <property type="match status" value="1"/>
</dbReference>
<dbReference type="Pfam" id="PF00387">
    <property type="entry name" value="PI-PLC-Y"/>
    <property type="match status" value="1"/>
</dbReference>
<dbReference type="PRINTS" id="PR00390">
    <property type="entry name" value="PHPHLIPASEC"/>
</dbReference>
<dbReference type="SMART" id="SM00239">
    <property type="entry name" value="C2"/>
    <property type="match status" value="1"/>
</dbReference>
<dbReference type="SMART" id="SM00233">
    <property type="entry name" value="PH"/>
    <property type="match status" value="1"/>
</dbReference>
<dbReference type="SMART" id="SM00148">
    <property type="entry name" value="PLCXc"/>
    <property type="match status" value="1"/>
</dbReference>
<dbReference type="SMART" id="SM00149">
    <property type="entry name" value="PLCYc"/>
    <property type="match status" value="1"/>
</dbReference>
<dbReference type="SUPFAM" id="SSF49562">
    <property type="entry name" value="C2 domain (Calcium/lipid-binding domain, CaLB)"/>
    <property type="match status" value="1"/>
</dbReference>
<dbReference type="SUPFAM" id="SSF47473">
    <property type="entry name" value="EF-hand"/>
    <property type="match status" value="1"/>
</dbReference>
<dbReference type="SUPFAM" id="SSF50729">
    <property type="entry name" value="PH domain-like"/>
    <property type="match status" value="1"/>
</dbReference>
<dbReference type="SUPFAM" id="SSF51695">
    <property type="entry name" value="PLC-like phosphodiesterases"/>
    <property type="match status" value="1"/>
</dbReference>
<dbReference type="PROSITE" id="PS50004">
    <property type="entry name" value="C2"/>
    <property type="match status" value="1"/>
</dbReference>
<dbReference type="PROSITE" id="PS00018">
    <property type="entry name" value="EF_HAND_1"/>
    <property type="match status" value="1"/>
</dbReference>
<dbReference type="PROSITE" id="PS50007">
    <property type="entry name" value="PIPLC_X_DOMAIN"/>
    <property type="match status" value="1"/>
</dbReference>
<dbReference type="PROSITE" id="PS50008">
    <property type="entry name" value="PIPLC_Y_DOMAIN"/>
    <property type="match status" value="1"/>
</dbReference>
<sequence length="789" mass="89258">MLCGRWRRCRRPPEEPPVAAQVAAQVAAPVALPSPPTPSDGGTKRPGLRALKKMGLTEDEDVRAMLRGSRLRKIRSRTWHKERLYRLQEDGLSVWFQRRIPRAPSQHIFFVQHIEAVREGHQSEGLRRFGGAFAPARCLTIAFKGRRKNLDLAAPTAEEAQRWVRGLTKLRARLDAMSQRERLDHWIHSYLHRADSNQDSKMSFKEIKSLLRMVNVDMNDMYAYLLFKECDHSNNDRLEGAEIEEFLRRLLKRPELEEIFHQYSGEDRVLSAPELLEFLEDQGEEGATLARAQQLIQTYELNETAKQHELMTLDGFMMYLLSPEGAALDNTHTCVFQDMNQPLAHYFISSSHNTYLTDSQIGGPSSTEAYVRAFAQGCRCVELDCWEGPGGEPVIYHGHTLTSKILFRDVVQAVRDHAFTLSPYPVILSLENHCGLEQQAAMARHLCTILGDMLVTQALDSPNPEELPSPEQLKGRVLVKGKKLPAARSEDGRALSDREEEEEDDEEEEEEVEAAAQRRLAKQISPELSALAVYCHATRLRTLHPAPNAPQPCQVSSLSERKAKKLIREAGNSFVRHNARQLTRVYPLGLRMNSANYSPQEMWNSGCQLVALNFQTPGYEMDLNAGRFLVNGQCGYVLKPACLRQPDSTFDPEYPGPPRTTLSIQVLTAQQLPKLNAEKPHSIVDPLVRIEIHGVPADCARQETDYVLNNGFNPRWGQTLQFQLRAPELALVRFVVEDYDATSPNDFVGQFTLPLSSLKQGYRHIHLLSKDGASLSPATLFIQIRIQRS</sequence>
<protein>
    <recommendedName>
        <fullName evidence="14">1-phosphatidylinositol 4,5-bisphosphate phosphodiesterase delta-3</fullName>
        <ecNumber evidence="8">3.1.4.11</ecNumber>
    </recommendedName>
    <alternativeName>
        <fullName>Phosphoinositide phospholipase C-delta-3</fullName>
    </alternativeName>
    <alternativeName>
        <fullName>Phospholipase C-delta-3</fullName>
        <shortName>PLC-delta-3</shortName>
    </alternativeName>
</protein>
<keyword id="KW-0106">Calcium</keyword>
<keyword id="KW-0963">Cytoplasm</keyword>
<keyword id="KW-0378">Hydrolase</keyword>
<keyword id="KW-0442">Lipid degradation</keyword>
<keyword id="KW-0443">Lipid metabolism</keyword>
<keyword id="KW-0472">Membrane</keyword>
<keyword id="KW-0479">Metal-binding</keyword>
<keyword id="KW-0597">Phosphoprotein</keyword>
<keyword id="KW-1267">Proteomics identification</keyword>
<keyword id="KW-1185">Reference proteome</keyword>
<keyword id="KW-0677">Repeat</keyword>
<keyword id="KW-0807">Transducer</keyword>
<name>PLCD3_HUMAN</name>
<feature type="chain" id="PRO_0000306821" description="1-phosphatidylinositol 4,5-bisphosphate phosphodiesterase delta-3">
    <location>
        <begin position="1"/>
        <end position="789"/>
    </location>
</feature>
<feature type="domain" description="PH">
    <location>
        <begin position="63"/>
        <end position="172"/>
    </location>
</feature>
<feature type="domain" description="EF-hand 1">
    <location>
        <begin position="182"/>
        <end position="217"/>
    </location>
</feature>
<feature type="domain" description="EF-hand 2">
    <location>
        <begin position="218"/>
        <end position="253"/>
    </location>
</feature>
<feature type="domain" description="EF-hand 3">
    <location>
        <begin position="250"/>
        <end position="285"/>
    </location>
</feature>
<feature type="domain" description="PI-PLC X-box" evidence="4">
    <location>
        <begin position="337"/>
        <end position="482"/>
    </location>
</feature>
<feature type="domain" description="PI-PLC Y-box" evidence="5">
    <location>
        <begin position="528"/>
        <end position="644"/>
    </location>
</feature>
<feature type="domain" description="C2" evidence="3">
    <location>
        <begin position="644"/>
        <end position="769"/>
    </location>
</feature>
<feature type="region of interest" description="Substrate binding" evidence="1">
    <location>
        <begin position="73"/>
        <end position="101"/>
    </location>
</feature>
<feature type="region of interest" description="Disordered" evidence="7">
    <location>
        <begin position="461"/>
        <end position="519"/>
    </location>
</feature>
<feature type="compositionally biased region" description="Basic and acidic residues" evidence="7">
    <location>
        <begin position="488"/>
        <end position="497"/>
    </location>
</feature>
<feature type="compositionally biased region" description="Acidic residues" evidence="7">
    <location>
        <begin position="498"/>
        <end position="513"/>
    </location>
</feature>
<feature type="active site" evidence="4">
    <location>
        <position position="352"/>
    </location>
</feature>
<feature type="active site" evidence="4">
    <location>
        <position position="397"/>
    </location>
</feature>
<feature type="binding site" evidence="14">
    <location>
        <position position="195"/>
    </location>
    <ligand>
        <name>Ca(2+)</name>
        <dbReference type="ChEBI" id="CHEBI:29108"/>
        <label>1</label>
    </ligand>
</feature>
<feature type="binding site" evidence="14">
    <location>
        <position position="197"/>
    </location>
    <ligand>
        <name>Ca(2+)</name>
        <dbReference type="ChEBI" id="CHEBI:29108"/>
        <label>1</label>
    </ligand>
</feature>
<feature type="binding site" evidence="14">
    <location>
        <position position="199"/>
    </location>
    <ligand>
        <name>Ca(2+)</name>
        <dbReference type="ChEBI" id="CHEBI:29108"/>
        <label>1</label>
    </ligand>
</feature>
<feature type="binding site" evidence="14">
    <location>
        <position position="201"/>
    </location>
    <ligand>
        <name>Ca(2+)</name>
        <dbReference type="ChEBI" id="CHEBI:29108"/>
        <label>1</label>
    </ligand>
</feature>
<feature type="binding site" evidence="14">
    <location>
        <position position="206"/>
    </location>
    <ligand>
        <name>Ca(2+)</name>
        <dbReference type="ChEBI" id="CHEBI:29108"/>
        <label>1</label>
    </ligand>
</feature>
<feature type="binding site" evidence="6">
    <location>
        <position position="231"/>
    </location>
    <ligand>
        <name>Ca(2+)</name>
        <dbReference type="ChEBI" id="CHEBI:29108"/>
        <label>2</label>
    </ligand>
</feature>
<feature type="binding site" evidence="6">
    <location>
        <position position="233"/>
    </location>
    <ligand>
        <name>Ca(2+)</name>
        <dbReference type="ChEBI" id="CHEBI:29108"/>
        <label>2</label>
    </ligand>
</feature>
<feature type="binding site" evidence="6">
    <location>
        <position position="235"/>
    </location>
    <ligand>
        <name>Ca(2+)</name>
        <dbReference type="ChEBI" id="CHEBI:29108"/>
        <label>2</label>
    </ligand>
</feature>
<feature type="binding site" evidence="6">
    <location>
        <position position="237"/>
    </location>
    <ligand>
        <name>Ca(2+)</name>
        <dbReference type="ChEBI" id="CHEBI:29108"/>
        <label>2</label>
    </ligand>
</feature>
<feature type="binding site" evidence="6">
    <location>
        <position position="242"/>
    </location>
    <ligand>
        <name>Ca(2+)</name>
        <dbReference type="ChEBI" id="CHEBI:29108"/>
        <label>2</label>
    </ligand>
</feature>
<feature type="binding site" evidence="1">
    <location>
        <position position="353"/>
    </location>
    <ligand>
        <name>Ca(2+)</name>
        <dbReference type="ChEBI" id="CHEBI:29108"/>
        <label>3</label>
        <note>catalytic</note>
    </ligand>
</feature>
<feature type="binding site" evidence="1">
    <location>
        <position position="382"/>
    </location>
    <ligand>
        <name>Ca(2+)</name>
        <dbReference type="ChEBI" id="CHEBI:29108"/>
        <label>3</label>
        <note>catalytic</note>
    </ligand>
</feature>
<feature type="binding site" evidence="1">
    <location>
        <position position="384"/>
    </location>
    <ligand>
        <name>Ca(2+)</name>
        <dbReference type="ChEBI" id="CHEBI:29108"/>
        <label>3</label>
        <note>catalytic</note>
    </ligand>
</feature>
<feature type="binding site" evidence="1">
    <location>
        <position position="431"/>
    </location>
    <ligand>
        <name>Ca(2+)</name>
        <dbReference type="ChEBI" id="CHEBI:29108"/>
        <label>3</label>
        <note>catalytic</note>
    </ligand>
</feature>
<feature type="binding site" evidence="1">
    <location>
        <position position="480"/>
    </location>
    <ligand>
        <name>substrate</name>
    </ligand>
</feature>
<feature type="binding site" evidence="1">
    <location>
        <position position="482"/>
    </location>
    <ligand>
        <name>substrate</name>
    </ligand>
</feature>
<feature type="binding site" evidence="1">
    <location>
        <position position="557"/>
    </location>
    <ligand>
        <name>substrate</name>
    </ligand>
</feature>
<feature type="binding site" evidence="1">
    <location>
        <position position="584"/>
    </location>
    <ligand>
        <name>substrate</name>
    </ligand>
</feature>
<feature type="binding site" evidence="1">
    <location>
        <position position="683"/>
    </location>
    <ligand>
        <name>Ca(2+)</name>
        <dbReference type="ChEBI" id="CHEBI:29108"/>
        <label>4</label>
    </ligand>
</feature>
<feature type="binding site" evidence="1">
    <location>
        <position position="685"/>
    </location>
    <ligand>
        <name>Ca(2+)</name>
        <dbReference type="ChEBI" id="CHEBI:29108"/>
        <label>4</label>
    </ligand>
</feature>
<feature type="binding site" evidence="1">
    <location>
        <position position="709"/>
    </location>
    <ligand>
        <name>Ca(2+)</name>
        <dbReference type="ChEBI" id="CHEBI:29108"/>
        <label>4</label>
    </ligand>
</feature>
<feature type="binding site" evidence="1">
    <location>
        <position position="738"/>
    </location>
    <ligand>
        <name>Ca(2+)</name>
        <dbReference type="ChEBI" id="CHEBI:29108"/>
        <label>5</label>
    </ligand>
</feature>
<feature type="binding site" evidence="1">
    <location>
        <position position="739"/>
    </location>
    <ligand>
        <name>Ca(2+)</name>
        <dbReference type="ChEBI" id="CHEBI:29108"/>
        <label>5</label>
    </ligand>
</feature>
<feature type="binding site" evidence="1">
    <location>
        <position position="740"/>
    </location>
    <ligand>
        <name>Ca(2+)</name>
        <dbReference type="ChEBI" id="CHEBI:29108"/>
        <label>5</label>
    </ligand>
</feature>
<feature type="modified residue" description="Phosphoserine" evidence="18 19">
    <location>
        <position position="105"/>
    </location>
</feature>
<feature type="modified residue" description="Phosphoserine" evidence="19">
    <location>
        <position position="496"/>
    </location>
</feature>
<feature type="modified residue" description="Phosphoserine" evidence="19">
    <location>
        <position position="573"/>
    </location>
</feature>
<feature type="sequence variant" id="VAR_035316" description="In dbSNP:rs734921.">
    <original>P</original>
    <variation>L</variation>
    <location>
        <position position="652"/>
    </location>
</feature>
<feature type="sequence conflict" description="In Ref. 3; CAD39054." evidence="14" ref="3">
    <original>I</original>
    <variation>T</variation>
    <location>
        <position position="207"/>
    </location>
</feature>
<comment type="function">
    <text evidence="2 8">Hydrolyzes the phosphatidylinositol 4,5-bisphosphate (PIP2) to generate 2 second messenger molecules diacylglycerol (DAG) and inositol 1,4,5-trisphosphate (IP3). DAG mediates the activation of protein kinase C (PKC), while IP3 releases Ca(2+) from intracellular stores. Essential for trophoblast and placental development. May participate in cytokinesis by hydrolyzing PIP2 at the cleavage furrow (PubMed:10336610). Regulates neurite outgrowth through the inhibition of RhoA/Rho kinase signaling (By similarity).</text>
</comment>
<comment type="catalytic activity">
    <reaction evidence="8">
        <text>a 1,2-diacyl-sn-glycero-3-phospho-(1D-myo-inositol-4,5-bisphosphate) + H2O = 1D-myo-inositol 1,4,5-trisphosphate + a 1,2-diacyl-sn-glycerol + H(+)</text>
        <dbReference type="Rhea" id="RHEA:33179"/>
        <dbReference type="ChEBI" id="CHEBI:15377"/>
        <dbReference type="ChEBI" id="CHEBI:15378"/>
        <dbReference type="ChEBI" id="CHEBI:17815"/>
        <dbReference type="ChEBI" id="CHEBI:58456"/>
        <dbReference type="ChEBI" id="CHEBI:203600"/>
        <dbReference type="EC" id="3.1.4.11"/>
    </reaction>
    <physiologicalReaction direction="left-to-right" evidence="15">
        <dbReference type="Rhea" id="RHEA:33180"/>
    </physiologicalReaction>
</comment>
<comment type="cofactor">
    <cofactor evidence="3 16">
        <name>Ca(2+)</name>
        <dbReference type="ChEBI" id="CHEBI:29108"/>
    </cofactor>
    <text evidence="16">Binds 5 Ca(2+) ions per subunit. Two of the Ca(2+) ions are bound to the C2 domain.</text>
</comment>
<comment type="activity regulation">
    <text evidence="8 13">Strongly activated by phosphatidic acid. Inhibited by phosphatidylethanolamine (PtdEtn), phosphatidylcholine (PtdCho), sphingomyelin and phosphatidylserine (PtdSer).</text>
</comment>
<comment type="biophysicochemical properties">
    <kinetics>
        <KM evidence="8">105.3 uM for PIP2</KM>
        <Vmax evidence="8">28.5 umol/min/mg enzyme</Vmax>
    </kinetics>
</comment>
<comment type="subcellular location">
    <subcellularLocation>
        <location>Membrane</location>
        <topology>Peripheral membrane protein</topology>
    </subcellularLocation>
    <subcellularLocation>
        <location>Cytoplasm</location>
    </subcellularLocation>
    <subcellularLocation>
        <location evidence="12">Cleavage furrow</location>
    </subcellularLocation>
    <text evidence="12">Localizes at the cleavage furrow during cytokinesis.</text>
</comment>
<comment type="tissue specificity">
    <text evidence="11">Present in corneal epithelial cells (at protein level).</text>
</comment>
<comment type="induction">
    <text evidence="9">Down-regulated by Ca(2+) and cAMP.</text>
</comment>
<comment type="domain">
    <text evidence="10">The C2 domain is a Ca(2+)-dependent membrane-targeting module.</text>
</comment>
<comment type="domain">
    <text evidence="8">The PH domain mediates interaction with the surface membrane by binding to PIP2.</text>
</comment>
<accession>Q8N3E9</accession>
<accession>Q8TEC1</accession>
<accession>Q8TF37</accession>
<accession>Q96FL6</accession>
<gene>
    <name evidence="17" type="primary">PLCD3</name>
    <name type="synonym">KIAA1964</name>
</gene>
<organism>
    <name type="scientific">Homo sapiens</name>
    <name type="common">Human</name>
    <dbReference type="NCBI Taxonomy" id="9606"/>
    <lineage>
        <taxon>Eukaryota</taxon>
        <taxon>Metazoa</taxon>
        <taxon>Chordata</taxon>
        <taxon>Craniata</taxon>
        <taxon>Vertebrata</taxon>
        <taxon>Euteleostomi</taxon>
        <taxon>Mammalia</taxon>
        <taxon>Eutheria</taxon>
        <taxon>Euarchontoglires</taxon>
        <taxon>Primates</taxon>
        <taxon>Haplorrhini</taxon>
        <taxon>Catarrhini</taxon>
        <taxon>Hominidae</taxon>
        <taxon>Homo</taxon>
    </lineage>
</organism>
<proteinExistence type="evidence at protein level"/>
<evidence type="ECO:0000250" key="1"/>
<evidence type="ECO:0000250" key="2">
    <source>
        <dbReference type="UniProtKB" id="Q8K2J0"/>
    </source>
</evidence>
<evidence type="ECO:0000255" key="3">
    <source>
        <dbReference type="PROSITE-ProRule" id="PRU00041"/>
    </source>
</evidence>
<evidence type="ECO:0000255" key="4">
    <source>
        <dbReference type="PROSITE-ProRule" id="PRU00270"/>
    </source>
</evidence>
<evidence type="ECO:0000255" key="5">
    <source>
        <dbReference type="PROSITE-ProRule" id="PRU00271"/>
    </source>
</evidence>
<evidence type="ECO:0000255" key="6">
    <source>
        <dbReference type="PROSITE-ProRule" id="PRU10142"/>
    </source>
</evidence>
<evidence type="ECO:0000256" key="7">
    <source>
        <dbReference type="SAM" id="MobiDB-lite"/>
    </source>
</evidence>
<evidence type="ECO:0000269" key="8">
    <source>
    </source>
</evidence>
<evidence type="ECO:0000269" key="9">
    <source>
    </source>
</evidence>
<evidence type="ECO:0000269" key="10">
    <source>
    </source>
</evidence>
<evidence type="ECO:0000269" key="11">
    <source>
    </source>
</evidence>
<evidence type="ECO:0000269" key="12">
    <source>
    </source>
</evidence>
<evidence type="ECO:0000269" key="13">
    <source>
    </source>
</evidence>
<evidence type="ECO:0000305" key="14"/>
<evidence type="ECO:0000305" key="15">
    <source>
    </source>
</evidence>
<evidence type="ECO:0000305" key="16">
    <source>
    </source>
</evidence>
<evidence type="ECO:0000312" key="17">
    <source>
        <dbReference type="HGNC" id="HGNC:9061"/>
    </source>
</evidence>
<evidence type="ECO:0007744" key="18">
    <source>
    </source>
</evidence>
<evidence type="ECO:0007744" key="19">
    <source>
    </source>
</evidence>
<reference key="1">
    <citation type="journal article" date="2004" name="Nat. Genet.">
        <title>Complete sequencing and characterization of 21,243 full-length human cDNAs.</title>
        <authorList>
            <person name="Ota T."/>
            <person name="Suzuki Y."/>
            <person name="Nishikawa T."/>
            <person name="Otsuki T."/>
            <person name="Sugiyama T."/>
            <person name="Irie R."/>
            <person name="Wakamatsu A."/>
            <person name="Hayashi K."/>
            <person name="Sato H."/>
            <person name="Nagai K."/>
            <person name="Kimura K."/>
            <person name="Makita H."/>
            <person name="Sekine M."/>
            <person name="Obayashi M."/>
            <person name="Nishi T."/>
            <person name="Shibahara T."/>
            <person name="Tanaka T."/>
            <person name="Ishii S."/>
            <person name="Yamamoto J."/>
            <person name="Saito K."/>
            <person name="Kawai Y."/>
            <person name="Isono Y."/>
            <person name="Nakamura Y."/>
            <person name="Nagahari K."/>
            <person name="Murakami K."/>
            <person name="Yasuda T."/>
            <person name="Iwayanagi T."/>
            <person name="Wagatsuma M."/>
            <person name="Shiratori A."/>
            <person name="Sudo H."/>
            <person name="Hosoiri T."/>
            <person name="Kaku Y."/>
            <person name="Kodaira H."/>
            <person name="Kondo H."/>
            <person name="Sugawara M."/>
            <person name="Takahashi M."/>
            <person name="Kanda K."/>
            <person name="Yokoi T."/>
            <person name="Furuya T."/>
            <person name="Kikkawa E."/>
            <person name="Omura Y."/>
            <person name="Abe K."/>
            <person name="Kamihara K."/>
            <person name="Katsuta N."/>
            <person name="Sato K."/>
            <person name="Tanikawa M."/>
            <person name="Yamazaki M."/>
            <person name="Ninomiya K."/>
            <person name="Ishibashi T."/>
            <person name="Yamashita H."/>
            <person name="Murakawa K."/>
            <person name="Fujimori K."/>
            <person name="Tanai H."/>
            <person name="Kimata M."/>
            <person name="Watanabe M."/>
            <person name="Hiraoka S."/>
            <person name="Chiba Y."/>
            <person name="Ishida S."/>
            <person name="Ono Y."/>
            <person name="Takiguchi S."/>
            <person name="Watanabe S."/>
            <person name="Yosida M."/>
            <person name="Hotuta T."/>
            <person name="Kusano J."/>
            <person name="Kanehori K."/>
            <person name="Takahashi-Fujii A."/>
            <person name="Hara H."/>
            <person name="Tanase T.-O."/>
            <person name="Nomura Y."/>
            <person name="Togiya S."/>
            <person name="Komai F."/>
            <person name="Hara R."/>
            <person name="Takeuchi K."/>
            <person name="Arita M."/>
            <person name="Imose N."/>
            <person name="Musashino K."/>
            <person name="Yuuki H."/>
            <person name="Oshima A."/>
            <person name="Sasaki N."/>
            <person name="Aotsuka S."/>
            <person name="Yoshikawa Y."/>
            <person name="Matsunawa H."/>
            <person name="Ichihara T."/>
            <person name="Shiohata N."/>
            <person name="Sano S."/>
            <person name="Moriya S."/>
            <person name="Momiyama H."/>
            <person name="Satoh N."/>
            <person name="Takami S."/>
            <person name="Terashima Y."/>
            <person name="Suzuki O."/>
            <person name="Nakagawa S."/>
            <person name="Senoh A."/>
            <person name="Mizoguchi H."/>
            <person name="Goto Y."/>
            <person name="Shimizu F."/>
            <person name="Wakebe H."/>
            <person name="Hishigaki H."/>
            <person name="Watanabe T."/>
            <person name="Sugiyama A."/>
            <person name="Takemoto M."/>
            <person name="Kawakami B."/>
            <person name="Yamazaki M."/>
            <person name="Watanabe K."/>
            <person name="Kumagai A."/>
            <person name="Itakura S."/>
            <person name="Fukuzumi Y."/>
            <person name="Fujimori Y."/>
            <person name="Komiyama M."/>
            <person name="Tashiro H."/>
            <person name="Tanigami A."/>
            <person name="Fujiwara T."/>
            <person name="Ono T."/>
            <person name="Yamada K."/>
            <person name="Fujii Y."/>
            <person name="Ozaki K."/>
            <person name="Hirao M."/>
            <person name="Ohmori Y."/>
            <person name="Kawabata A."/>
            <person name="Hikiji T."/>
            <person name="Kobatake N."/>
            <person name="Inagaki H."/>
            <person name="Ikema Y."/>
            <person name="Okamoto S."/>
            <person name="Okitani R."/>
            <person name="Kawakami T."/>
            <person name="Noguchi S."/>
            <person name="Itoh T."/>
            <person name="Shigeta K."/>
            <person name="Senba T."/>
            <person name="Matsumura K."/>
            <person name="Nakajima Y."/>
            <person name="Mizuno T."/>
            <person name="Morinaga M."/>
            <person name="Sasaki M."/>
            <person name="Togashi T."/>
            <person name="Oyama M."/>
            <person name="Hata H."/>
            <person name="Watanabe M."/>
            <person name="Komatsu T."/>
            <person name="Mizushima-Sugano J."/>
            <person name="Satoh T."/>
            <person name="Shirai Y."/>
            <person name="Takahashi Y."/>
            <person name="Nakagawa K."/>
            <person name="Okumura K."/>
            <person name="Nagase T."/>
            <person name="Nomura N."/>
            <person name="Kikuchi H."/>
            <person name="Masuho Y."/>
            <person name="Yamashita R."/>
            <person name="Nakai K."/>
            <person name="Yada T."/>
            <person name="Nakamura Y."/>
            <person name="Ohara O."/>
            <person name="Isogai T."/>
            <person name="Sugano S."/>
        </authorList>
    </citation>
    <scope>NUCLEOTIDE SEQUENCE [LARGE SCALE MRNA]</scope>
</reference>
<reference key="2">
    <citation type="journal article" date="2004" name="Genome Res.">
        <title>The status, quality, and expansion of the NIH full-length cDNA project: the Mammalian Gene Collection (MGC).</title>
        <authorList>
            <consortium name="The MGC Project Team"/>
        </authorList>
    </citation>
    <scope>NUCLEOTIDE SEQUENCE [LARGE SCALE MRNA]</scope>
    <source>
        <tissue>Colon</tissue>
        <tissue>Pancreas</tissue>
    </source>
</reference>
<reference key="3">
    <citation type="journal article" date="2007" name="BMC Genomics">
        <title>The full-ORF clone resource of the German cDNA consortium.</title>
        <authorList>
            <person name="Bechtel S."/>
            <person name="Rosenfelder H."/>
            <person name="Duda A."/>
            <person name="Schmidt C.P."/>
            <person name="Ernst U."/>
            <person name="Wellenreuther R."/>
            <person name="Mehrle A."/>
            <person name="Schuster C."/>
            <person name="Bahr A."/>
            <person name="Bloecker H."/>
            <person name="Heubner D."/>
            <person name="Hoerlein A."/>
            <person name="Michel G."/>
            <person name="Wedler H."/>
            <person name="Koehrer K."/>
            <person name="Ottenwaelder B."/>
            <person name="Poustka A."/>
            <person name="Wiemann S."/>
            <person name="Schupp I."/>
        </authorList>
    </citation>
    <scope>NUCLEOTIDE SEQUENCE [LARGE SCALE MRNA] OF 13-789</scope>
    <source>
        <tissue>Amygdala</tissue>
    </source>
</reference>
<reference key="4">
    <citation type="journal article" date="2001" name="DNA Res.">
        <title>Prediction of the coding sequences of unidentified human genes. XXII. The complete sequences of 50 new cDNA clones which code for large proteins.</title>
        <authorList>
            <person name="Nagase T."/>
            <person name="Kikuno R."/>
            <person name="Ohara O."/>
        </authorList>
    </citation>
    <scope>NUCLEOTIDE SEQUENCE [LARGE SCALE MRNA] OF 33-789</scope>
    <source>
        <tissue>Brain</tissue>
    </source>
</reference>
<reference key="5">
    <citation type="journal article" date="1997" name="Acta Biochim. Pol.">
        <title>Expression, purification and kinetic properties of human recombinant phospholipase C delta 3.</title>
        <authorList>
            <person name="Pawelczyk T."/>
            <person name="Matecki A."/>
        </authorList>
    </citation>
    <scope>PURIFICATION</scope>
</reference>
<reference key="6">
    <citation type="journal article" date="1997" name="Protein Expr. Purif.">
        <title>Phospholipase C isoforms delta 1 and delta 3 from human fibroblasts. High-yield expression in Escherichia coli, simple purification, and properties.</title>
        <authorList>
            <person name="Ghosh S."/>
            <person name="Pawelczyk T."/>
            <person name="Lowenstein J.M."/>
        </authorList>
    </citation>
    <scope>PURIFICATION</scope>
</reference>
<reference key="7">
    <citation type="journal article" date="1998" name="Eur. J. Biochem.">
        <title>Localization of phospholipase C delta3 in the cell and regulation of its activity by phospholipids and calcium.</title>
        <authorList>
            <person name="Pawelczyk T."/>
            <person name="Matecki A."/>
        </authorList>
    </citation>
    <scope>SUBCELLULAR LOCATION</scope>
    <scope>COFACTOR</scope>
    <scope>ACTIVITY REGULATION</scope>
</reference>
<reference key="8">
    <citation type="journal article" date="1999" name="Cytogenet. Cell Genet.">
        <title>Assignment of the human PLC delta3 gene (PLCD3) to human chromosome band 17q21 by fluorescence in situ hybridization.</title>
        <authorList>
            <person name="Kim H."/>
            <person name="Suh P.-G."/>
            <person name="Ryu S.H."/>
            <person name="Park S.H."/>
        </authorList>
    </citation>
    <scope>IDENTIFICATION</scope>
</reference>
<reference key="9">
    <citation type="journal article" date="1999" name="Eur. J. Biochem.">
        <title>Phospholipase C-delta3 binds with high specificity to phosphatidylinositol 4,5-bisphosphate and phosphatidic acid in bilayer membranes.</title>
        <authorList>
            <person name="Pawelczyk T."/>
            <person name="Matecki A."/>
        </authorList>
    </citation>
    <scope>ENZYME ACTIVITY</scope>
    <scope>BIOPHYSICOCHEMICAL PROPERTIES</scope>
    <scope>ACTIVITY REGULATION</scope>
    <scope>DOMAIN PH</scope>
    <scope>CATALYTIC ACTIVITY</scope>
    <scope>FUNCTION</scope>
</reference>
<reference key="10">
    <citation type="journal article" date="2001" name="Biochem. Biophys. Res. Commun.">
        <title>Downregulation of phospholipase C delta3 by cAMP and calcium.</title>
        <authorList>
            <person name="Lin F.-G."/>
            <person name="Cheng H.-F."/>
            <person name="Lee I.-F."/>
            <person name="Kao H.-J."/>
            <person name="Loh S.-H."/>
            <person name="Lee W.-H."/>
        </authorList>
    </citation>
    <scope>INDUCTION</scope>
</reference>
<reference key="11">
    <citation type="journal article" date="2002" name="J. Biol. Chem.">
        <title>Membrane targeting of C2 domains of phospholipase C-delta isoforms.</title>
        <authorList>
            <person name="Ananthanarayanan B."/>
            <person name="Das S."/>
            <person name="Rhee S.-G."/>
            <person name="Murray D."/>
            <person name="Cho W."/>
        </authorList>
    </citation>
    <scope>DOMAIN C2</scope>
</reference>
<reference key="12">
    <citation type="journal article" date="2004" name="Invest. Ophthalmol. Vis. Sci.">
        <title>Expression of phospholipases A2 and C in human corneal epithelial cells.</title>
        <authorList>
            <person name="Landreville S."/>
            <person name="Coulombe S."/>
            <person name="Carrier P."/>
            <person name="Gelb M.H."/>
            <person name="Guerin S.L."/>
            <person name="Salesse C."/>
        </authorList>
    </citation>
    <scope>TISSUE SPECIFICITY</scope>
</reference>
<reference key="13">
    <citation type="journal article" date="2006" name="J. Biochem.">
        <title>Phospholipase C isoforms are localized at the cleavage furrow during cytokinesis.</title>
        <authorList>
            <person name="Naito Y."/>
            <person name="Okada M."/>
            <person name="Yagisawa H."/>
        </authorList>
    </citation>
    <scope>SUBCELLULAR LOCATION</scope>
</reference>
<reference key="14">
    <citation type="journal article" date="2008" name="Proc. Natl. Acad. Sci. U.S.A.">
        <title>A quantitative atlas of mitotic phosphorylation.</title>
        <authorList>
            <person name="Dephoure N."/>
            <person name="Zhou C."/>
            <person name="Villen J."/>
            <person name="Beausoleil S.A."/>
            <person name="Bakalarski C.E."/>
            <person name="Elledge S.J."/>
            <person name="Gygi S.P."/>
        </authorList>
    </citation>
    <scope>IDENTIFICATION BY MASS SPECTROMETRY [LARGE SCALE ANALYSIS]</scope>
    <source>
        <tissue>Cervix carcinoma</tissue>
    </source>
</reference>
<reference key="15">
    <citation type="journal article" date="2010" name="Sci. Signal.">
        <title>Quantitative phosphoproteomics reveals widespread full phosphorylation site occupancy during mitosis.</title>
        <authorList>
            <person name="Olsen J.V."/>
            <person name="Vermeulen M."/>
            <person name="Santamaria A."/>
            <person name="Kumar C."/>
            <person name="Miller M.L."/>
            <person name="Jensen L.J."/>
            <person name="Gnad F."/>
            <person name="Cox J."/>
            <person name="Jensen T.S."/>
            <person name="Nigg E.A."/>
            <person name="Brunak S."/>
            <person name="Mann M."/>
        </authorList>
    </citation>
    <scope>PHOSPHORYLATION [LARGE SCALE ANALYSIS] AT SER-105</scope>
    <scope>IDENTIFICATION BY MASS SPECTROMETRY [LARGE SCALE ANALYSIS]</scope>
    <source>
        <tissue>Cervix carcinoma</tissue>
    </source>
</reference>
<reference key="16">
    <citation type="journal article" date="2013" name="J. Proteome Res.">
        <title>Toward a comprehensive characterization of a human cancer cell phosphoproteome.</title>
        <authorList>
            <person name="Zhou H."/>
            <person name="Di Palma S."/>
            <person name="Preisinger C."/>
            <person name="Peng M."/>
            <person name="Polat A.N."/>
            <person name="Heck A.J."/>
            <person name="Mohammed S."/>
        </authorList>
    </citation>
    <scope>PHOSPHORYLATION [LARGE SCALE ANALYSIS] AT SER-105; SER-496 AND SER-573</scope>
    <scope>IDENTIFICATION BY MASS SPECTROMETRY [LARGE SCALE ANALYSIS]</scope>
    <source>
        <tissue>Cervix carcinoma</tissue>
        <tissue>Erythroleukemia</tissue>
    </source>
</reference>